<organism>
    <name type="scientific">Actinobacillus pleuropneumoniae serotype 7 (strain AP76)</name>
    <dbReference type="NCBI Taxonomy" id="537457"/>
    <lineage>
        <taxon>Bacteria</taxon>
        <taxon>Pseudomonadati</taxon>
        <taxon>Pseudomonadota</taxon>
        <taxon>Gammaproteobacteria</taxon>
        <taxon>Pasteurellales</taxon>
        <taxon>Pasteurellaceae</taxon>
        <taxon>Actinobacillus</taxon>
    </lineage>
</organism>
<keyword id="KW-0067">ATP-binding</keyword>
<keyword id="KW-0963">Cytoplasm</keyword>
<keyword id="KW-0324">Glycolysis</keyword>
<keyword id="KW-0418">Kinase</keyword>
<keyword id="KW-0547">Nucleotide-binding</keyword>
<keyword id="KW-0808">Transferase</keyword>
<reference key="1">
    <citation type="submission" date="2008-06" db="EMBL/GenBank/DDBJ databases">
        <title>Genome and proteome analysis of A. pleuropneumoniae serotype 7.</title>
        <authorList>
            <person name="Linke B."/>
            <person name="Buettner F."/>
            <person name="Martinez-Arias R."/>
            <person name="Goesmann A."/>
            <person name="Baltes N."/>
            <person name="Tegetmeyer H."/>
            <person name="Singh M."/>
            <person name="Gerlach G.F."/>
        </authorList>
    </citation>
    <scope>NUCLEOTIDE SEQUENCE [LARGE SCALE GENOMIC DNA]</scope>
    <source>
        <strain>AP76</strain>
    </source>
</reference>
<protein>
    <recommendedName>
        <fullName evidence="1">Phosphoglycerate kinase</fullName>
        <ecNumber evidence="1">2.7.2.3</ecNumber>
    </recommendedName>
</protein>
<evidence type="ECO:0000255" key="1">
    <source>
        <dbReference type="HAMAP-Rule" id="MF_00145"/>
    </source>
</evidence>
<comment type="catalytic activity">
    <reaction evidence="1">
        <text>(2R)-3-phosphoglycerate + ATP = (2R)-3-phospho-glyceroyl phosphate + ADP</text>
        <dbReference type="Rhea" id="RHEA:14801"/>
        <dbReference type="ChEBI" id="CHEBI:30616"/>
        <dbReference type="ChEBI" id="CHEBI:57604"/>
        <dbReference type="ChEBI" id="CHEBI:58272"/>
        <dbReference type="ChEBI" id="CHEBI:456216"/>
        <dbReference type="EC" id="2.7.2.3"/>
    </reaction>
</comment>
<comment type="pathway">
    <text evidence="1">Carbohydrate degradation; glycolysis; pyruvate from D-glyceraldehyde 3-phosphate: step 2/5.</text>
</comment>
<comment type="subunit">
    <text evidence="1">Monomer.</text>
</comment>
<comment type="subcellular location">
    <subcellularLocation>
        <location evidence="1">Cytoplasm</location>
    </subcellularLocation>
</comment>
<comment type="similarity">
    <text evidence="1">Belongs to the phosphoglycerate kinase family.</text>
</comment>
<name>PGK_ACTP7</name>
<feature type="chain" id="PRO_1000096316" description="Phosphoglycerate kinase">
    <location>
        <begin position="1"/>
        <end position="391"/>
    </location>
</feature>
<feature type="binding site" evidence="1">
    <location>
        <begin position="21"/>
        <end position="23"/>
    </location>
    <ligand>
        <name>substrate</name>
    </ligand>
</feature>
<feature type="binding site" evidence="1">
    <location>
        <position position="36"/>
    </location>
    <ligand>
        <name>substrate</name>
    </ligand>
</feature>
<feature type="binding site" evidence="1">
    <location>
        <begin position="59"/>
        <end position="62"/>
    </location>
    <ligand>
        <name>substrate</name>
    </ligand>
</feature>
<feature type="binding site" evidence="1">
    <location>
        <position position="114"/>
    </location>
    <ligand>
        <name>substrate</name>
    </ligand>
</feature>
<feature type="binding site" evidence="1">
    <location>
        <position position="147"/>
    </location>
    <ligand>
        <name>substrate</name>
    </ligand>
</feature>
<feature type="binding site" evidence="1">
    <location>
        <position position="198"/>
    </location>
    <ligand>
        <name>ATP</name>
        <dbReference type="ChEBI" id="CHEBI:30616"/>
    </ligand>
</feature>
<feature type="binding site" evidence="1">
    <location>
        <position position="315"/>
    </location>
    <ligand>
        <name>ATP</name>
        <dbReference type="ChEBI" id="CHEBI:30616"/>
    </ligand>
</feature>
<feature type="binding site" evidence="1">
    <location>
        <begin position="344"/>
        <end position="347"/>
    </location>
    <ligand>
        <name>ATP</name>
        <dbReference type="ChEBI" id="CHEBI:30616"/>
    </ligand>
</feature>
<accession>B3H222</accession>
<dbReference type="EC" id="2.7.2.3" evidence="1"/>
<dbReference type="EMBL" id="CP001091">
    <property type="protein sequence ID" value="ACE61952.1"/>
    <property type="molecule type" value="Genomic_DNA"/>
</dbReference>
<dbReference type="RefSeq" id="WP_005612697.1">
    <property type="nucleotide sequence ID" value="NC_010939.1"/>
</dbReference>
<dbReference type="SMR" id="B3H222"/>
<dbReference type="KEGG" id="apa:APP7_1300"/>
<dbReference type="HOGENOM" id="CLU_025427_0_2_6"/>
<dbReference type="UniPathway" id="UPA00109">
    <property type="reaction ID" value="UER00185"/>
</dbReference>
<dbReference type="Proteomes" id="UP000001226">
    <property type="component" value="Chromosome"/>
</dbReference>
<dbReference type="GO" id="GO:0005829">
    <property type="term" value="C:cytosol"/>
    <property type="evidence" value="ECO:0007669"/>
    <property type="project" value="TreeGrafter"/>
</dbReference>
<dbReference type="GO" id="GO:0043531">
    <property type="term" value="F:ADP binding"/>
    <property type="evidence" value="ECO:0007669"/>
    <property type="project" value="TreeGrafter"/>
</dbReference>
<dbReference type="GO" id="GO:0005524">
    <property type="term" value="F:ATP binding"/>
    <property type="evidence" value="ECO:0007669"/>
    <property type="project" value="UniProtKB-KW"/>
</dbReference>
<dbReference type="GO" id="GO:0004618">
    <property type="term" value="F:phosphoglycerate kinase activity"/>
    <property type="evidence" value="ECO:0007669"/>
    <property type="project" value="UniProtKB-UniRule"/>
</dbReference>
<dbReference type="GO" id="GO:0006094">
    <property type="term" value="P:gluconeogenesis"/>
    <property type="evidence" value="ECO:0007669"/>
    <property type="project" value="TreeGrafter"/>
</dbReference>
<dbReference type="GO" id="GO:0006096">
    <property type="term" value="P:glycolytic process"/>
    <property type="evidence" value="ECO:0007669"/>
    <property type="project" value="UniProtKB-UniRule"/>
</dbReference>
<dbReference type="FunFam" id="3.40.50.1260:FF:000001">
    <property type="entry name" value="Phosphoglycerate kinase"/>
    <property type="match status" value="1"/>
</dbReference>
<dbReference type="FunFam" id="3.40.50.1260:FF:000002">
    <property type="entry name" value="Phosphoglycerate kinase"/>
    <property type="match status" value="1"/>
</dbReference>
<dbReference type="Gene3D" id="3.40.50.1260">
    <property type="entry name" value="Phosphoglycerate kinase, N-terminal domain"/>
    <property type="match status" value="2"/>
</dbReference>
<dbReference type="HAMAP" id="MF_00145">
    <property type="entry name" value="Phosphoglyc_kinase"/>
    <property type="match status" value="1"/>
</dbReference>
<dbReference type="InterPro" id="IPR001576">
    <property type="entry name" value="Phosphoglycerate_kinase"/>
</dbReference>
<dbReference type="InterPro" id="IPR015824">
    <property type="entry name" value="Phosphoglycerate_kinase_N"/>
</dbReference>
<dbReference type="InterPro" id="IPR036043">
    <property type="entry name" value="Phosphoglycerate_kinase_sf"/>
</dbReference>
<dbReference type="PANTHER" id="PTHR11406">
    <property type="entry name" value="PHOSPHOGLYCERATE KINASE"/>
    <property type="match status" value="1"/>
</dbReference>
<dbReference type="PANTHER" id="PTHR11406:SF23">
    <property type="entry name" value="PHOSPHOGLYCERATE KINASE 1, CHLOROPLASTIC-RELATED"/>
    <property type="match status" value="1"/>
</dbReference>
<dbReference type="Pfam" id="PF00162">
    <property type="entry name" value="PGK"/>
    <property type="match status" value="1"/>
</dbReference>
<dbReference type="PIRSF" id="PIRSF000724">
    <property type="entry name" value="Pgk"/>
    <property type="match status" value="1"/>
</dbReference>
<dbReference type="PRINTS" id="PR00477">
    <property type="entry name" value="PHGLYCKINASE"/>
</dbReference>
<dbReference type="SUPFAM" id="SSF53748">
    <property type="entry name" value="Phosphoglycerate kinase"/>
    <property type="match status" value="1"/>
</dbReference>
<sequence length="391" mass="41170">MSVIKMADLDLAGKRLFIRADLNVPVKDGKVTSDARIRATIPTLKLALQKGAKVMVTSHLGRPTEGVFEEANSLQPVVDYLNASDLGVPVRLVRDYLDGVEVAENEIVVLENVRINKGEKKNDPELAKKYAALCDVFVMDAFGTAHRAEGSTYGVAEYAPVACAGPLLAAELDALGKALKEPQRPMLAIVGGSKVSTKLTVLDSLSKIADQLIVGGGIANTFIAAEGHPVGKSLYEADLIPEAKRLAAATNIPVPVDVRVGTEFSEIAPATEKAVSEVQADESIFDIGDKSAEELANIIKSAKTILWNGPVGVFEFPNFRKGTEVISNAIAEATANGAFSIAGGGDTLAAIDLFGIADKISYISTGGGAFLEFVEGKVLPAVEILEKRANG</sequence>
<gene>
    <name evidence="1" type="primary">pgk</name>
    <name type="ordered locus">APP7_1300</name>
</gene>
<proteinExistence type="inferred from homology"/>